<protein>
    <recommendedName>
        <fullName>Cx9C motif-containing protein 4, mitochondrial</fullName>
    </recommendedName>
</protein>
<proteinExistence type="inferred from homology"/>
<comment type="subcellular location">
    <subcellularLocation>
        <location evidence="1">Mitochondrion intermembrane space</location>
    </subcellularLocation>
    <text evidence="1">Imported into the mitochondria via the mitochondrial disulfide relay system.</text>
</comment>
<comment type="domain">
    <text evidence="1">The twin Cx9C motifs are involved in the recognition by the mitochondrial disulfide relay system.</text>
</comment>
<comment type="similarity">
    <text evidence="3">Belongs to the CMC4 family.</text>
</comment>
<organism>
    <name type="scientific">Debaryomyces hansenii (strain ATCC 36239 / CBS 767 / BCRC 21394 / JCM 1990 / NBRC 0083 / IGC 2968)</name>
    <name type="common">Yeast</name>
    <name type="synonym">Torulaspora hansenii</name>
    <dbReference type="NCBI Taxonomy" id="284592"/>
    <lineage>
        <taxon>Eukaryota</taxon>
        <taxon>Fungi</taxon>
        <taxon>Dikarya</taxon>
        <taxon>Ascomycota</taxon>
        <taxon>Saccharomycotina</taxon>
        <taxon>Pichiomycetes</taxon>
        <taxon>Debaryomycetaceae</taxon>
        <taxon>Debaryomyces</taxon>
    </lineage>
</organism>
<keyword id="KW-1015">Disulfide bond</keyword>
<keyword id="KW-0496">Mitochondrion</keyword>
<keyword id="KW-1185">Reference proteome</keyword>
<keyword id="KW-0677">Repeat</keyword>
<gene>
    <name type="primary">CMC4</name>
    <name type="ordered locus">DEHA2D06776g</name>
</gene>
<dbReference type="EMBL" id="CR382136">
    <property type="protein sequence ID" value="CAR65625.1"/>
    <property type="molecule type" value="Genomic_DNA"/>
</dbReference>
<dbReference type="RefSeq" id="XP_002770269.1">
    <property type="nucleotide sequence ID" value="XM_002770223.1"/>
</dbReference>
<dbReference type="SMR" id="B5RTE0"/>
<dbReference type="FunCoup" id="B5RTE0">
    <property type="interactions" value="101"/>
</dbReference>
<dbReference type="STRING" id="284592.B5RTE0"/>
<dbReference type="GeneID" id="8998476"/>
<dbReference type="KEGG" id="dha:DEHA2D06776g"/>
<dbReference type="VEuPathDB" id="FungiDB:DEHA2D06776g"/>
<dbReference type="eggNOG" id="ENOG502S7M4">
    <property type="taxonomic scope" value="Eukaryota"/>
</dbReference>
<dbReference type="HOGENOM" id="CLU_177210_0_1_1"/>
<dbReference type="InParanoid" id="B5RTE0"/>
<dbReference type="OMA" id="YQEEKCQ"/>
<dbReference type="OrthoDB" id="13601at2759"/>
<dbReference type="Proteomes" id="UP000000599">
    <property type="component" value="Chromosome D"/>
</dbReference>
<dbReference type="GO" id="GO:0005758">
    <property type="term" value="C:mitochondrial intermembrane space"/>
    <property type="evidence" value="ECO:0007669"/>
    <property type="project" value="UniProtKB-SubCell"/>
</dbReference>
<dbReference type="FunFam" id="1.10.287.1130:FF:000008">
    <property type="entry name" value="Cx9C motif-containing protein 4, mitochondrial"/>
    <property type="match status" value="1"/>
</dbReference>
<dbReference type="Gene3D" id="1.10.287.1130">
    <property type="entry name" value="CytochromE C oxidase copper chaperone"/>
    <property type="match status" value="1"/>
</dbReference>
<dbReference type="InterPro" id="IPR027179">
    <property type="entry name" value="CMC4"/>
</dbReference>
<dbReference type="InterPro" id="IPR009069">
    <property type="entry name" value="Cys_alpha_HP_mot_SF"/>
</dbReference>
<dbReference type="PANTHER" id="PTHR15590">
    <property type="entry name" value="CX9C MOTIF-CONTAINING PROTEIN 4"/>
    <property type="match status" value="1"/>
</dbReference>
<dbReference type="PANTHER" id="PTHR15590:SF0">
    <property type="entry name" value="CX9C MOTIF-CONTAINING PROTEIN 4"/>
    <property type="match status" value="1"/>
</dbReference>
<dbReference type="Pfam" id="PF08991">
    <property type="entry name" value="CMC4"/>
    <property type="match status" value="1"/>
</dbReference>
<dbReference type="SUPFAM" id="SSF47072">
    <property type="entry name" value="Cysteine alpha-hairpin motif"/>
    <property type="match status" value="1"/>
</dbReference>
<dbReference type="PROSITE" id="PS51808">
    <property type="entry name" value="CHCH"/>
    <property type="match status" value="1"/>
</dbReference>
<accession>B5RTE0</accession>
<name>CMC4_DEBHA</name>
<reference key="1">
    <citation type="journal article" date="2004" name="Nature">
        <title>Genome evolution in yeasts.</title>
        <authorList>
            <person name="Dujon B."/>
            <person name="Sherman D."/>
            <person name="Fischer G."/>
            <person name="Durrens P."/>
            <person name="Casaregola S."/>
            <person name="Lafontaine I."/>
            <person name="de Montigny J."/>
            <person name="Marck C."/>
            <person name="Neuveglise C."/>
            <person name="Talla E."/>
            <person name="Goffard N."/>
            <person name="Frangeul L."/>
            <person name="Aigle M."/>
            <person name="Anthouard V."/>
            <person name="Babour A."/>
            <person name="Barbe V."/>
            <person name="Barnay S."/>
            <person name="Blanchin S."/>
            <person name="Beckerich J.-M."/>
            <person name="Beyne E."/>
            <person name="Bleykasten C."/>
            <person name="Boisrame A."/>
            <person name="Boyer J."/>
            <person name="Cattolico L."/>
            <person name="Confanioleri F."/>
            <person name="de Daruvar A."/>
            <person name="Despons L."/>
            <person name="Fabre E."/>
            <person name="Fairhead C."/>
            <person name="Ferry-Dumazet H."/>
            <person name="Groppi A."/>
            <person name="Hantraye F."/>
            <person name="Hennequin C."/>
            <person name="Jauniaux N."/>
            <person name="Joyet P."/>
            <person name="Kachouri R."/>
            <person name="Kerrest A."/>
            <person name="Koszul R."/>
            <person name="Lemaire M."/>
            <person name="Lesur I."/>
            <person name="Ma L."/>
            <person name="Muller H."/>
            <person name="Nicaud J.-M."/>
            <person name="Nikolski M."/>
            <person name="Oztas S."/>
            <person name="Ozier-Kalogeropoulos O."/>
            <person name="Pellenz S."/>
            <person name="Potier S."/>
            <person name="Richard G.-F."/>
            <person name="Straub M.-L."/>
            <person name="Suleau A."/>
            <person name="Swennen D."/>
            <person name="Tekaia F."/>
            <person name="Wesolowski-Louvel M."/>
            <person name="Westhof E."/>
            <person name="Wirth B."/>
            <person name="Zeniou-Meyer M."/>
            <person name="Zivanovic Y."/>
            <person name="Bolotin-Fukuhara M."/>
            <person name="Thierry A."/>
            <person name="Bouchier C."/>
            <person name="Caudron B."/>
            <person name="Scarpelli C."/>
            <person name="Gaillardin C."/>
            <person name="Weissenbach J."/>
            <person name="Wincker P."/>
            <person name="Souciet J.-L."/>
        </authorList>
    </citation>
    <scope>NUCLEOTIDE SEQUENCE [LARGE SCALE GENOMIC DNA]</scope>
    <source>
        <strain>ATCC 36239 / CBS 767 / BCRC 21394 / JCM 1990 / NBRC 0083 / IGC 2968</strain>
    </source>
</reference>
<evidence type="ECO:0000250" key="1"/>
<evidence type="ECO:0000255" key="2">
    <source>
        <dbReference type="PROSITE-ProRule" id="PRU01150"/>
    </source>
</evidence>
<evidence type="ECO:0000305" key="3"/>
<sequence>MSSSSDKTDPCKPEACAIQDCLQQNNYNESKCSKIIDNLYLCCKKYYEKNGSDKQTTCCPKFNLLQLKLKQRELGKIDAEMVDSRKG</sequence>
<feature type="chain" id="PRO_0000408574" description="Cx9C motif-containing protein 4, mitochondrial">
    <location>
        <begin position="1"/>
        <end position="87"/>
    </location>
</feature>
<feature type="domain" description="CHCH" evidence="2">
    <location>
        <begin position="8"/>
        <end position="50"/>
    </location>
</feature>
<feature type="short sequence motif" description="Cx9C motif 1" evidence="2">
    <location>
        <begin position="11"/>
        <end position="21"/>
    </location>
</feature>
<feature type="short sequence motif" description="Cx9C motif 2" evidence="2">
    <location>
        <begin position="32"/>
        <end position="42"/>
    </location>
</feature>
<feature type="disulfide bond" evidence="2">
    <location>
        <begin position="11"/>
        <end position="42"/>
    </location>
</feature>
<feature type="disulfide bond" evidence="2">
    <location>
        <begin position="21"/>
        <end position="32"/>
    </location>
</feature>